<accession>P0C9V7</accession>
<feature type="signal peptide" evidence="4">
    <location>
        <begin position="1"/>
        <end position="16"/>
    </location>
</feature>
<feature type="chain" id="PRO_0000373360" description="CD2 homolog">
    <location>
        <begin position="17"/>
        <end position="392"/>
    </location>
</feature>
<feature type="topological domain" description="Extracellular" evidence="4">
    <location>
        <begin position="17"/>
        <end position="222"/>
    </location>
</feature>
<feature type="transmembrane region" description="Helical" evidence="4">
    <location>
        <begin position="223"/>
        <end position="243"/>
    </location>
</feature>
<feature type="topological domain" description="Cytoplasmic" evidence="4">
    <location>
        <begin position="244"/>
        <end position="392"/>
    </location>
</feature>
<feature type="repeat" description="1">
    <location>
        <begin position="319"/>
        <end position="324"/>
    </location>
</feature>
<feature type="repeat" description="2">
    <location>
        <begin position="325"/>
        <end position="330"/>
    </location>
</feature>
<feature type="repeat" description="3">
    <location>
        <begin position="331"/>
        <end position="336"/>
    </location>
</feature>
<feature type="repeat" description="4">
    <location>
        <begin position="337"/>
        <end position="342"/>
    </location>
</feature>
<feature type="repeat" description="5">
    <location>
        <begin position="343"/>
        <end position="348"/>
    </location>
</feature>
<feature type="region of interest" description="Disordered" evidence="5">
    <location>
        <begin position="258"/>
        <end position="290"/>
    </location>
</feature>
<feature type="region of interest" description="5 X 6 AA tandem repeats of K-P-C-[PRS]-[P]-[PS]">
    <location>
        <begin position="319"/>
        <end position="348"/>
    </location>
</feature>
<feature type="region of interest" description="Disordered" evidence="5">
    <location>
        <begin position="328"/>
        <end position="357"/>
    </location>
</feature>
<feature type="compositionally biased region" description="Basic and acidic residues" evidence="5">
    <location>
        <begin position="269"/>
        <end position="283"/>
    </location>
</feature>
<feature type="glycosylation site" description="N-linked (GlcNAc...) asparagine; by host" evidence="4">
    <location>
        <position position="39"/>
    </location>
</feature>
<feature type="glycosylation site" description="N-linked (GlcNAc...) asparagine; by host" evidence="4">
    <location>
        <position position="88"/>
    </location>
</feature>
<feature type="glycosylation site" description="N-linked (GlcNAc...) asparagine; by host" evidence="4">
    <location>
        <position position="92"/>
    </location>
</feature>
<feature type="glycosylation site" description="N-linked (GlcNAc...) asparagine; by host" evidence="4">
    <location>
        <position position="106"/>
    </location>
</feature>
<feature type="glycosylation site" description="N-linked (GlcNAc...) asparagine; by host" evidence="4">
    <location>
        <position position="148"/>
    </location>
</feature>
<feature type="glycosylation site" description="N-linked (GlcNAc...) asparagine; by host" evidence="4">
    <location>
        <position position="159"/>
    </location>
</feature>
<feature type="glycosylation site" description="N-linked (GlcNAc...) asparagine; by host" evidence="4">
    <location>
        <position position="183"/>
    </location>
</feature>
<feature type="glycosylation site" description="N-linked (GlcNAc...) asparagine; by host" evidence="4">
    <location>
        <position position="191"/>
    </location>
</feature>
<feature type="glycosylation site" description="N-linked (GlcNAc...) asparagine; by host" evidence="4">
    <location>
        <position position="198"/>
    </location>
</feature>
<feature type="glycosylation site" description="N-linked (GlcNAc...) asparagine; by host" evidence="4">
    <location>
        <position position="204"/>
    </location>
</feature>
<feature type="disulfide bond" evidence="1">
    <location>
        <begin position="137"/>
        <end position="205"/>
    </location>
</feature>
<feature type="disulfide bond" evidence="1">
    <location>
        <begin position="144"/>
        <end position="188"/>
    </location>
</feature>
<gene>
    <name type="ordered locus">Ken-070</name>
</gene>
<protein>
    <recommendedName>
        <fullName>CD2 homolog</fullName>
        <shortName>CD2H</shortName>
    </recommendedName>
    <alternativeName>
        <fullName>5HL</fullName>
    </alternativeName>
    <alternativeName>
        <fullName>CD2v</fullName>
    </alternativeName>
    <alternativeName>
        <fullName>T-lymphocyte CD2 receptor-like protein</fullName>
    </alternativeName>
    <alternativeName>
        <fullName evidence="3">pEP402R</fullName>
    </alternativeName>
</protein>
<reference key="1">
    <citation type="submission" date="2003-03" db="EMBL/GenBank/DDBJ databases">
        <title>African swine fever virus genomes.</title>
        <authorList>
            <person name="Kutish G.F."/>
            <person name="Rock D.L."/>
        </authorList>
    </citation>
    <scope>NUCLEOTIDE SEQUENCE [LARGE SCALE GENOMIC DNA]</scope>
</reference>
<keyword id="KW-1015">Disulfide bond</keyword>
<keyword id="KW-0325">Glycoprotein</keyword>
<keyword id="KW-1032">Host cell membrane</keyword>
<keyword id="KW-1040">Host Golgi apparatus</keyword>
<keyword id="KW-1043">Host membrane</keyword>
<keyword id="KW-0426">Late protein</keyword>
<keyword id="KW-0472">Membrane</keyword>
<keyword id="KW-0675">Receptor</keyword>
<keyword id="KW-0677">Repeat</keyword>
<keyword id="KW-0732">Signal</keyword>
<keyword id="KW-0812">Transmembrane</keyword>
<keyword id="KW-1133">Transmembrane helix</keyword>
<keyword id="KW-0946">Virion</keyword>
<proteinExistence type="inferred from homology"/>
<evidence type="ECO:0000250" key="1">
    <source>
        <dbReference type="UniProtKB" id="P06729"/>
    </source>
</evidence>
<evidence type="ECO:0000250" key="2">
    <source>
        <dbReference type="UniProtKB" id="P0C9V9"/>
    </source>
</evidence>
<evidence type="ECO:0000250" key="3">
    <source>
        <dbReference type="UniProtKB" id="Q89501"/>
    </source>
</evidence>
<evidence type="ECO:0000255" key="4"/>
<evidence type="ECO:0000256" key="5">
    <source>
        <dbReference type="SAM" id="MobiDB-lite"/>
    </source>
</evidence>
<evidence type="ECO:0000305" key="6"/>
<name>CD2H_ASFK5</name>
<organismHost>
    <name type="scientific">Ornithodoros</name>
    <name type="common">relapsing fever ticks</name>
    <dbReference type="NCBI Taxonomy" id="6937"/>
</organismHost>
<organismHost>
    <name type="scientific">Phacochoerus aethiopicus</name>
    <name type="common">Warthog</name>
    <dbReference type="NCBI Taxonomy" id="85517"/>
</organismHost>
<organismHost>
    <name type="scientific">Phacochoerus africanus</name>
    <name type="common">Warthog</name>
    <dbReference type="NCBI Taxonomy" id="41426"/>
</organismHost>
<organismHost>
    <name type="scientific">Potamochoerus larvatus</name>
    <name type="common">Bushpig</name>
    <dbReference type="NCBI Taxonomy" id="273792"/>
</organismHost>
<organismHost>
    <name type="scientific">Sus scrofa</name>
    <name type="common">Pig</name>
    <dbReference type="NCBI Taxonomy" id="9823"/>
</organismHost>
<sequence>MIIKLIFLICFKIVLSIDNKTKFNETLILDNIDYWVKFNDTITLDSNITSEIEAVSWNFYNNTFNLLAICGKASNFCSCSNYSTSFFNITNNCSLTIFLIDETLFNTTYQIVYSTNIINYKINLLIPVTPPIISYNCANCSINCKKSNGTNTNIFLSINDTIVTYTNESILNYDYNCSILNNNFTVTCIINNTISTSNTTEFINCTNILLSSYLDFFQVTSYIFYMIIFIVTGITVSILISIITFLFIRKRKHVEEIESPPPESNEEEQQCHHDTTSIHEPSPREPLLPKPYSRYQYNTPIYYMRPSTQQLFKSYSLPKPCPPPKPCPPPKPCPPPKPCPPSKPCPPPEPYSPPKPCPPPKPYPSLPSIPLPPDIPPLSTQNISLIHVDRII</sequence>
<comment type="function">
    <text evidence="3">May play an immunosuppressive role by inhibiting lymphocyte proliferation and subsequently facilitating viral replication and generalization of infection (By similarity). Responsible for viral hemadsorption, which may help viral spread (By similarity). Increases virus replication in the tick vector at the step of virus uptake or replication in the tick gut (By similarity). May play a role in the host Golgi reorganization to yield viral factories (By similarity). May play a role in host cell penetration (By similarity).</text>
</comment>
<comment type="subunit">
    <text evidence="3">Both glycosylated and nonglycosylated forms interact (via C-terminus) with the host AP-1 complex.</text>
</comment>
<comment type="subcellular location">
    <subcellularLocation>
        <location evidence="3">Host cell membrane</location>
        <topology evidence="3">Single-pass type I membrane protein</topology>
    </subcellularLocation>
    <subcellularLocation>
        <location evidence="3">Virion membrane</location>
    </subcellularLocation>
    <subcellularLocation>
        <location evidence="3">Host Golgi apparatus</location>
    </subcellularLocation>
    <text evidence="2 3">Localizes around the cytoplasmic viral factories which are probably derived from the host Golgi membrane (By similarity). Both proteolytic fragments localize to membrane compartments (By similarity). A minor fraction localizes on the host plasma membrane and on the outer viral envelope of budding particles (By similarity).</text>
</comment>
<comment type="induction">
    <text evidence="6">Expressed in the late phase of the viral replicative cycle.</text>
</comment>
<comment type="PTM">
    <text evidence="2">Cleaved into two fragments of 63 kDa and 26 kDa containing respectively the glycosylated N-terminus and the nonglycosylated C-terminus (By similarity). A full-length 89-kDa glycosylated form also exists (By similarity).</text>
</comment>
<comment type="similarity">
    <text evidence="6">Belongs to the asfivirus CD2 homolog protein family.</text>
</comment>
<organism>
    <name type="scientific">African swine fever virus (isolate Pig/Kenya/KEN-50/1950)</name>
    <name type="common">ASFV</name>
    <dbReference type="NCBI Taxonomy" id="561445"/>
    <lineage>
        <taxon>Viruses</taxon>
        <taxon>Varidnaviria</taxon>
        <taxon>Bamfordvirae</taxon>
        <taxon>Nucleocytoviricota</taxon>
        <taxon>Pokkesviricetes</taxon>
        <taxon>Asfuvirales</taxon>
        <taxon>Asfarviridae</taxon>
        <taxon>Asfivirus</taxon>
        <taxon>African swine fever virus</taxon>
    </lineage>
</organism>
<dbReference type="EMBL" id="AY261360">
    <property type="status" value="NOT_ANNOTATED_CDS"/>
    <property type="molecule type" value="Genomic_DNA"/>
</dbReference>
<dbReference type="SMR" id="P0C9V7"/>
<dbReference type="Proteomes" id="UP000000861">
    <property type="component" value="Segment"/>
</dbReference>
<dbReference type="GO" id="GO:0044177">
    <property type="term" value="C:host cell Golgi apparatus"/>
    <property type="evidence" value="ECO:0007669"/>
    <property type="project" value="UniProtKB-SubCell"/>
</dbReference>
<dbReference type="GO" id="GO:0020002">
    <property type="term" value="C:host cell plasma membrane"/>
    <property type="evidence" value="ECO:0007669"/>
    <property type="project" value="UniProtKB-SubCell"/>
</dbReference>
<dbReference type="GO" id="GO:0016020">
    <property type="term" value="C:membrane"/>
    <property type="evidence" value="ECO:0007669"/>
    <property type="project" value="UniProtKB-KW"/>
</dbReference>
<dbReference type="GO" id="GO:0055036">
    <property type="term" value="C:virion membrane"/>
    <property type="evidence" value="ECO:0007669"/>
    <property type="project" value="UniProtKB-SubCell"/>
</dbReference>
<dbReference type="Gene3D" id="2.60.40.10">
    <property type="entry name" value="Immunoglobulins"/>
    <property type="match status" value="1"/>
</dbReference>
<dbReference type="InterPro" id="IPR036179">
    <property type="entry name" value="Ig-like_dom_sf"/>
</dbReference>
<dbReference type="InterPro" id="IPR013783">
    <property type="entry name" value="Ig-like_fold"/>
</dbReference>
<dbReference type="SUPFAM" id="SSF48726">
    <property type="entry name" value="Immunoglobulin"/>
    <property type="match status" value="1"/>
</dbReference>